<name>CHRY2_GIBZE</name>
<reference key="1">
    <citation type="journal article" date="2007" name="Science">
        <title>The Fusarium graminearum genome reveals a link between localized polymorphism and pathogen specialization.</title>
        <authorList>
            <person name="Cuomo C.A."/>
            <person name="Gueldener U."/>
            <person name="Xu J.-R."/>
            <person name="Trail F."/>
            <person name="Turgeon B.G."/>
            <person name="Di Pietro A."/>
            <person name="Walton J.D."/>
            <person name="Ma L.-J."/>
            <person name="Baker S.E."/>
            <person name="Rep M."/>
            <person name="Adam G."/>
            <person name="Antoniw J."/>
            <person name="Baldwin T."/>
            <person name="Calvo S.E."/>
            <person name="Chang Y.-L."/>
            <person name="DeCaprio D."/>
            <person name="Gale L.R."/>
            <person name="Gnerre S."/>
            <person name="Goswami R.S."/>
            <person name="Hammond-Kosack K."/>
            <person name="Harris L.J."/>
            <person name="Hilburn K."/>
            <person name="Kennell J.C."/>
            <person name="Kroken S."/>
            <person name="Magnuson J.K."/>
            <person name="Mannhaupt G."/>
            <person name="Mauceli E.W."/>
            <person name="Mewes H.-W."/>
            <person name="Mitterbauer R."/>
            <person name="Muehlbauer G."/>
            <person name="Muensterkoetter M."/>
            <person name="Nelson D."/>
            <person name="O'Donnell K."/>
            <person name="Ouellet T."/>
            <person name="Qi W."/>
            <person name="Quesneville H."/>
            <person name="Roncero M.I.G."/>
            <person name="Seong K.-Y."/>
            <person name="Tetko I.V."/>
            <person name="Urban M."/>
            <person name="Waalwijk C."/>
            <person name="Ward T.J."/>
            <person name="Yao J."/>
            <person name="Birren B.W."/>
            <person name="Kistler H.C."/>
        </authorList>
    </citation>
    <scope>NUCLEOTIDE SEQUENCE [LARGE SCALE GENOMIC DNA]</scope>
    <source>
        <strain>ATCC MYA-4620 / CBS 123657 / FGSC 9075 / NRRL 31084 / PH-1</strain>
    </source>
</reference>
<reference key="2">
    <citation type="journal article" date="2010" name="Nature">
        <title>Comparative genomics reveals mobile pathogenicity chromosomes in Fusarium.</title>
        <authorList>
            <person name="Ma L.-J."/>
            <person name="van der Does H.C."/>
            <person name="Borkovich K.A."/>
            <person name="Coleman J.J."/>
            <person name="Daboussi M.-J."/>
            <person name="Di Pietro A."/>
            <person name="Dufresne M."/>
            <person name="Freitag M."/>
            <person name="Grabherr M."/>
            <person name="Henrissat B."/>
            <person name="Houterman P.M."/>
            <person name="Kang S."/>
            <person name="Shim W.-B."/>
            <person name="Woloshuk C."/>
            <person name="Xie X."/>
            <person name="Xu J.-R."/>
            <person name="Antoniw J."/>
            <person name="Baker S.E."/>
            <person name="Bluhm B.H."/>
            <person name="Breakspear A."/>
            <person name="Brown D.W."/>
            <person name="Butchko R.A.E."/>
            <person name="Chapman S."/>
            <person name="Coulson R."/>
            <person name="Coutinho P.M."/>
            <person name="Danchin E.G.J."/>
            <person name="Diener A."/>
            <person name="Gale L.R."/>
            <person name="Gardiner D.M."/>
            <person name="Goff S."/>
            <person name="Hammond-Kosack K.E."/>
            <person name="Hilburn K."/>
            <person name="Hua-Van A."/>
            <person name="Jonkers W."/>
            <person name="Kazan K."/>
            <person name="Kodira C.D."/>
            <person name="Koehrsen M."/>
            <person name="Kumar L."/>
            <person name="Lee Y.-H."/>
            <person name="Li L."/>
            <person name="Manners J.M."/>
            <person name="Miranda-Saavedra D."/>
            <person name="Mukherjee M."/>
            <person name="Park G."/>
            <person name="Park J."/>
            <person name="Park S.-Y."/>
            <person name="Proctor R.H."/>
            <person name="Regev A."/>
            <person name="Ruiz-Roldan M.C."/>
            <person name="Sain D."/>
            <person name="Sakthikumar S."/>
            <person name="Sykes S."/>
            <person name="Schwartz D.C."/>
            <person name="Turgeon B.G."/>
            <person name="Wapinski I."/>
            <person name="Yoder O."/>
            <person name="Young S."/>
            <person name="Zeng Q."/>
            <person name="Zhou S."/>
            <person name="Galagan J."/>
            <person name="Cuomo C.A."/>
            <person name="Kistler H.C."/>
            <person name="Rep M."/>
        </authorList>
    </citation>
    <scope>GENOME REANNOTATION</scope>
    <source>
        <strain>ATCC MYA-4620 / CBS 123657 / FGSC 9075 / NRRL 31084 / PH-1</strain>
    </source>
</reference>
<reference key="3">
    <citation type="journal article" date="2015" name="BMC Genomics">
        <title>The completed genome sequence of the pathogenic ascomycete fungus Fusarium graminearum.</title>
        <authorList>
            <person name="King R."/>
            <person name="Urban M."/>
            <person name="Hammond-Kosack M.C.U."/>
            <person name="Hassani-Pak K."/>
            <person name="Hammond-Kosack K.E."/>
        </authorList>
    </citation>
    <scope>NUCLEOTIDE SEQUENCE [LARGE SCALE GENOMIC DNA]</scope>
    <source>
        <strain>ATCC MYA-4620 / CBS 123657 / FGSC 9075 / NRRL 31084 / PH-1</strain>
    </source>
</reference>
<reference key="4">
    <citation type="journal article" date="2017" name="J. Nat. Prod.">
        <title>Chrysogine biosynthesis is mediated by a two-module nonribosomal peptide synthetase.</title>
        <authorList>
            <person name="Wollenberg R.D."/>
            <person name="Saei W."/>
            <person name="Westphal K.R."/>
            <person name="Klitgaard C.S."/>
            <person name="Nielsen K.L."/>
            <person name="Lysoee E."/>
            <person name="Gardiner D.M."/>
            <person name="Wimmer R."/>
            <person name="Sondergaard T.E."/>
            <person name="Soerensen J.L."/>
        </authorList>
    </citation>
    <scope>FUNCTION</scope>
    <scope>PATHWAY</scope>
</reference>
<comment type="function">
    <text evidence="3 6">Amidase; part of the gene cluster that mediates the biosynthesis of the yellow pigment chrysogine (PubMed:28708398). Pyruvic acid and anthranilic acid are likely substrates for the nonribosomal peptide synthetase chry1/NRPS14, with pyruvic acid adenylated by the first A domain and anthranilic acid by the second (Probable). If pyruvic acid and anthranilic acid are merged and released from chry1/NRPS14 by hydrolysis, a subsequent amidation would lead to 2-pyruvoylaminobenzamide (Probable). This process is probably catalyzed by the amidotransferase chry2 using glutamine as amino donor (Probable). The dehydrogenase chry5 that has a terminal berberine bridge domain for C-N cyclization could catalyze the cyclization of 2-pyruvoylaminobenzamide to yield acetyl-4(3H)-quinazolidinone (Probable). A final reduction of acetyl-4(3H)-quinazolidinone catalyzed by the oxidoreductase chry4 would result in chrysogine (Probable).</text>
</comment>
<comment type="pathway">
    <text evidence="6">Pigment biosynthesis.</text>
</comment>
<comment type="similarity">
    <text evidence="5">Belongs to the asparagine synthetase family.</text>
</comment>
<accession>I1S3K8</accession>
<accession>A0A098E1Z9</accession>
<dbReference type="EC" id="3.-.-.-" evidence="6"/>
<dbReference type="EMBL" id="HG970334">
    <property type="protein sequence ID" value="CEF87644.1"/>
    <property type="molecule type" value="Genomic_DNA"/>
</dbReference>
<dbReference type="RefSeq" id="XP_011325837.1">
    <property type="nucleotide sequence ID" value="XM_011327535.1"/>
</dbReference>
<dbReference type="SMR" id="I1S3K8"/>
<dbReference type="STRING" id="229533.I1S3K8"/>
<dbReference type="KEGG" id="fgr:FGSG_11396"/>
<dbReference type="VEuPathDB" id="FungiDB:FGRAMPH1_01G21961"/>
<dbReference type="eggNOG" id="KOG0571">
    <property type="taxonomic scope" value="Eukaryota"/>
</dbReference>
<dbReference type="HOGENOM" id="CLU_014658_1_0_1"/>
<dbReference type="InParanoid" id="I1S3K8"/>
<dbReference type="OrthoDB" id="60047at110618"/>
<dbReference type="Proteomes" id="UP000070720">
    <property type="component" value="Chromosome 3"/>
</dbReference>
<dbReference type="GO" id="GO:0005829">
    <property type="term" value="C:cytosol"/>
    <property type="evidence" value="ECO:0007669"/>
    <property type="project" value="TreeGrafter"/>
</dbReference>
<dbReference type="GO" id="GO:0004066">
    <property type="term" value="F:asparagine synthase (glutamine-hydrolyzing) activity"/>
    <property type="evidence" value="ECO:0007669"/>
    <property type="project" value="InterPro"/>
</dbReference>
<dbReference type="GO" id="GO:0005524">
    <property type="term" value="F:ATP binding"/>
    <property type="evidence" value="ECO:0007669"/>
    <property type="project" value="UniProtKB-KW"/>
</dbReference>
<dbReference type="GO" id="GO:0016787">
    <property type="term" value="F:hydrolase activity"/>
    <property type="evidence" value="ECO:0007669"/>
    <property type="project" value="UniProtKB-KW"/>
</dbReference>
<dbReference type="GO" id="GO:0006529">
    <property type="term" value="P:asparagine biosynthetic process"/>
    <property type="evidence" value="ECO:0007669"/>
    <property type="project" value="InterPro"/>
</dbReference>
<dbReference type="CDD" id="cd01991">
    <property type="entry name" value="Asn_synthase_B_C"/>
    <property type="match status" value="1"/>
</dbReference>
<dbReference type="CDD" id="cd00712">
    <property type="entry name" value="AsnB"/>
    <property type="match status" value="1"/>
</dbReference>
<dbReference type="FunFam" id="3.60.20.10:FF:000155">
    <property type="entry name" value="Asparagine synthetase (Eurofung)"/>
    <property type="match status" value="1"/>
</dbReference>
<dbReference type="Gene3D" id="3.60.20.10">
    <property type="entry name" value="Glutamine Phosphoribosylpyrophosphate, subunit 1, domain 1"/>
    <property type="match status" value="1"/>
</dbReference>
<dbReference type="Gene3D" id="3.40.50.620">
    <property type="entry name" value="HUPs"/>
    <property type="match status" value="2"/>
</dbReference>
<dbReference type="InterPro" id="IPR006426">
    <property type="entry name" value="Asn_synth_AEB"/>
</dbReference>
<dbReference type="InterPro" id="IPR001962">
    <property type="entry name" value="Asn_synthase"/>
</dbReference>
<dbReference type="InterPro" id="IPR051786">
    <property type="entry name" value="ASN_synthetase/amidase"/>
</dbReference>
<dbReference type="InterPro" id="IPR033738">
    <property type="entry name" value="AsnB_N"/>
</dbReference>
<dbReference type="InterPro" id="IPR017932">
    <property type="entry name" value="GATase_2_dom"/>
</dbReference>
<dbReference type="InterPro" id="IPR029055">
    <property type="entry name" value="Ntn_hydrolases_N"/>
</dbReference>
<dbReference type="InterPro" id="IPR014729">
    <property type="entry name" value="Rossmann-like_a/b/a_fold"/>
</dbReference>
<dbReference type="NCBIfam" id="TIGR01536">
    <property type="entry name" value="asn_synth_AEB"/>
    <property type="match status" value="1"/>
</dbReference>
<dbReference type="PANTHER" id="PTHR43284:SF1">
    <property type="entry name" value="ASPARAGINE SYNTHETASE"/>
    <property type="match status" value="1"/>
</dbReference>
<dbReference type="PANTHER" id="PTHR43284">
    <property type="entry name" value="ASPARAGINE SYNTHETASE (GLUTAMINE-HYDROLYZING)"/>
    <property type="match status" value="1"/>
</dbReference>
<dbReference type="Pfam" id="PF00733">
    <property type="entry name" value="Asn_synthase"/>
    <property type="match status" value="1"/>
</dbReference>
<dbReference type="Pfam" id="PF13537">
    <property type="entry name" value="GATase_7"/>
    <property type="match status" value="1"/>
</dbReference>
<dbReference type="PIRSF" id="PIRSF001589">
    <property type="entry name" value="Asn_synthetase_glu-h"/>
    <property type="match status" value="1"/>
</dbReference>
<dbReference type="SUPFAM" id="SSF52402">
    <property type="entry name" value="Adenine nucleotide alpha hydrolases-like"/>
    <property type="match status" value="1"/>
</dbReference>
<dbReference type="SUPFAM" id="SSF56235">
    <property type="entry name" value="N-terminal nucleophile aminohydrolases (Ntn hydrolases)"/>
    <property type="match status" value="1"/>
</dbReference>
<dbReference type="PROSITE" id="PS51278">
    <property type="entry name" value="GATASE_TYPE_2"/>
    <property type="match status" value="1"/>
</dbReference>
<feature type="chain" id="PRO_0000450173" description="Amidase chry2">
    <location>
        <begin position="1"/>
        <end position="671"/>
    </location>
</feature>
<feature type="domain" description="Glutamine amidotransferase type-2" evidence="2">
    <location>
        <begin position="2"/>
        <end position="220"/>
    </location>
</feature>
<feature type="domain" description="Asparagine synthetase" evidence="1">
    <location>
        <begin position="251"/>
        <end position="639"/>
    </location>
</feature>
<feature type="active site" description="Nucleophile" evidence="2">
    <location>
        <position position="2"/>
    </location>
</feature>
<keyword id="KW-0067">ATP-binding</keyword>
<keyword id="KW-0315">Glutamine amidotransferase</keyword>
<keyword id="KW-0378">Hydrolase</keyword>
<keyword id="KW-0547">Nucleotide-binding</keyword>
<keyword id="KW-1185">Reference proteome</keyword>
<evidence type="ECO:0000255" key="1"/>
<evidence type="ECO:0000255" key="2">
    <source>
        <dbReference type="PROSITE-ProRule" id="PRU00609"/>
    </source>
</evidence>
<evidence type="ECO:0000269" key="3">
    <source>
    </source>
</evidence>
<evidence type="ECO:0000303" key="4">
    <source>
    </source>
</evidence>
<evidence type="ECO:0000305" key="5"/>
<evidence type="ECO:0000305" key="6">
    <source>
    </source>
</evidence>
<proteinExistence type="inferred from homology"/>
<organism>
    <name type="scientific">Gibberella zeae (strain ATCC MYA-4620 / CBS 123657 / FGSC 9075 / NRRL 31084 / PH-1)</name>
    <name type="common">Wheat head blight fungus</name>
    <name type="synonym">Fusarium graminearum</name>
    <dbReference type="NCBI Taxonomy" id="229533"/>
    <lineage>
        <taxon>Eukaryota</taxon>
        <taxon>Fungi</taxon>
        <taxon>Dikarya</taxon>
        <taxon>Ascomycota</taxon>
        <taxon>Pezizomycotina</taxon>
        <taxon>Sordariomycetes</taxon>
        <taxon>Hypocreomycetidae</taxon>
        <taxon>Hypocreales</taxon>
        <taxon>Nectriaceae</taxon>
        <taxon>Fusarium</taxon>
    </lineage>
</organism>
<sequence>MCGISAFITHPGHSRSPVLNGDAKQVVEELETSLDLIAHRGPDARGRWFSDNHHVGLGHVRLSIIDLSPSGNQPFHDEQGGIHAVVNGELYDYERYKAQLADEFKFVGNSDCEIVIALYKHYGLSFISHLRGEFAFVLWDENRQQLIAARDRYGIKSLYYTVHQNKLLVATEIKSFLAFGLEPEWCVRSLRDQSWRVDSTTFFEGVYKVRPGHYLICRPNEREEQHPYWDLEYPDKFAKDLRSEDEITEGVRERLLEAVRIRLKADVPVAVYLSGGIDSSSVAGMVSHLIKQGTKLGNETSLLPSSMKCYTVQFDEGSGADESAIARRTADFLGVDIHLVKMDEEALVSRFEDTTWYSEVPLPDLNGMGRLALAEAVHAQGIKAVITGEGSDEHFGGYDAFRADSLSEPDHSWPAMMTDTERQEAHALASKEAQYGIFGDFTPKVPISTKRMFYSNHVASSIARVGSLPFSDWTKVYGNSIPETTMIEGFDGRVRDNILKRWHPVHTAQYMFVKTFMPHFILRYNGDNIDMVHQVESRCPFLDHHLTEYVNNVPPSLKMRYNAKDKSWREKHILREAVKPFVTDEVYNMSKKAYMGPRKFWPGGPLHKKISELVTKANVENLGFVDWQATQDAMDGAFNKQEGLALRRIITVAQFVVLGQRFGVKRASGRR</sequence>
<gene>
    <name evidence="4" type="primary">chry2</name>
    <name type="ORF">FG11396</name>
    <name type="ORF">FGRAMPH1_01T21961</name>
</gene>
<protein>
    <recommendedName>
        <fullName evidence="4">Amidase chry2</fullName>
        <ecNumber evidence="6">3.-.-.-</ecNumber>
    </recommendedName>
    <alternativeName>
        <fullName evidence="4">Chrysogine biosynthesis cluster protein 2</fullName>
    </alternativeName>
</protein>